<organism>
    <name type="scientific">Streptomyces coelicolor (strain ATCC BAA-471 / A3(2) / M145)</name>
    <dbReference type="NCBI Taxonomy" id="100226"/>
    <lineage>
        <taxon>Bacteria</taxon>
        <taxon>Bacillati</taxon>
        <taxon>Actinomycetota</taxon>
        <taxon>Actinomycetes</taxon>
        <taxon>Kitasatosporales</taxon>
        <taxon>Streptomycetaceae</taxon>
        <taxon>Streptomyces</taxon>
        <taxon>Streptomyces albidoflavus group</taxon>
    </lineage>
</organism>
<accession>Q9F1Y6</accession>
<name>MIBS_STRCO</name>
<proteinExistence type="evidence at protein level"/>
<evidence type="ECO:0000250" key="1"/>
<evidence type="ECO:0000256" key="2">
    <source>
        <dbReference type="SAM" id="MobiDB-lite"/>
    </source>
</evidence>
<evidence type="ECO:0000269" key="3">
    <source>
    </source>
</evidence>
<evidence type="ECO:0000305" key="4"/>
<evidence type="ECO:0000305" key="5">
    <source>
    </source>
</evidence>
<evidence type="ECO:0007829" key="6">
    <source>
        <dbReference type="PDB" id="3V1V"/>
    </source>
</evidence>
<evidence type="ECO:0007829" key="7">
    <source>
        <dbReference type="PDB" id="4LA6"/>
    </source>
</evidence>
<keyword id="KW-0002">3D-structure</keyword>
<keyword id="KW-0456">Lyase</keyword>
<keyword id="KW-0460">Magnesium</keyword>
<keyword id="KW-0479">Metal-binding</keyword>
<keyword id="KW-1185">Reference proteome</keyword>
<gene>
    <name type="ordered locus">SCO7700</name>
    <name type="ORF">SC1A4.08</name>
    <name type="ORF">SCBAC12C8.01</name>
</gene>
<dbReference type="EC" id="4.2.3.118"/>
<dbReference type="EMBL" id="AB035202">
    <property type="protein sequence ID" value="BAB20433.1"/>
    <property type="molecule type" value="Genomic_DNA"/>
</dbReference>
<dbReference type="EMBL" id="AL939132">
    <property type="protein sequence ID" value="CAD55534.1"/>
    <property type="molecule type" value="Genomic_DNA"/>
</dbReference>
<dbReference type="RefSeq" id="NP_733742.1">
    <property type="nucleotide sequence ID" value="NC_003888.3"/>
</dbReference>
<dbReference type="RefSeq" id="WP_011031839.1">
    <property type="nucleotide sequence ID" value="NZ_VNID01000005.1"/>
</dbReference>
<dbReference type="PDB" id="3V1V">
    <property type="method" value="X-ray"/>
    <property type="resolution" value="1.80 A"/>
    <property type="chains" value="A=29-440"/>
</dbReference>
<dbReference type="PDB" id="3V1X">
    <property type="method" value="X-ray"/>
    <property type="resolution" value="1.96 A"/>
    <property type="chains" value="A=1-440"/>
</dbReference>
<dbReference type="PDB" id="4LA5">
    <property type="method" value="X-ray"/>
    <property type="resolution" value="1.85 A"/>
    <property type="chains" value="A=1-440"/>
</dbReference>
<dbReference type="PDB" id="4LA6">
    <property type="method" value="X-ray"/>
    <property type="resolution" value="2.00 A"/>
    <property type="chains" value="A=1-440"/>
</dbReference>
<dbReference type="PDBsum" id="3V1V"/>
<dbReference type="PDBsum" id="3V1X"/>
<dbReference type="PDBsum" id="4LA5"/>
<dbReference type="PDBsum" id="4LA6"/>
<dbReference type="SMR" id="Q9F1Y6"/>
<dbReference type="STRING" id="100226.gene:17765360"/>
<dbReference type="PaxDb" id="100226-SCO7700"/>
<dbReference type="DNASU" id="1103138"/>
<dbReference type="KEGG" id="sco:SCO7700"/>
<dbReference type="PATRIC" id="fig|100226.15.peg.7820"/>
<dbReference type="eggNOG" id="COG3170">
    <property type="taxonomic scope" value="Bacteria"/>
</dbReference>
<dbReference type="HOGENOM" id="CLU_047127_0_0_11"/>
<dbReference type="InParanoid" id="Q9F1Y6"/>
<dbReference type="OrthoDB" id="4567121at2"/>
<dbReference type="BioCyc" id="MetaCyc:MONOMER-17560"/>
<dbReference type="BRENDA" id="4.2.3.118">
    <property type="organism ID" value="5998"/>
</dbReference>
<dbReference type="SABIO-RK" id="Q9F1Y6"/>
<dbReference type="EvolutionaryTrace" id="Q9F1Y6"/>
<dbReference type="Proteomes" id="UP000001973">
    <property type="component" value="Chromosome"/>
</dbReference>
<dbReference type="GO" id="GO:0046872">
    <property type="term" value="F:metal ion binding"/>
    <property type="evidence" value="ECO:0007669"/>
    <property type="project" value="UniProtKB-KW"/>
</dbReference>
<dbReference type="GO" id="GO:0010333">
    <property type="term" value="F:terpene synthase activity"/>
    <property type="evidence" value="ECO:0000314"/>
    <property type="project" value="UniProtKB"/>
</dbReference>
<dbReference type="GO" id="GO:0042214">
    <property type="term" value="P:terpene metabolic process"/>
    <property type="evidence" value="ECO:0000314"/>
    <property type="project" value="UniProtKB"/>
</dbReference>
<dbReference type="CDD" id="cd00687">
    <property type="entry name" value="Terpene_cyclase_nonplant_C1"/>
    <property type="match status" value="1"/>
</dbReference>
<dbReference type="FunFam" id="1.10.600.10:FF:000019">
    <property type="entry name" value="2-methylisoborneol synthase"/>
    <property type="match status" value="1"/>
</dbReference>
<dbReference type="Gene3D" id="1.10.600.10">
    <property type="entry name" value="Farnesyl Diphosphate Synthase"/>
    <property type="match status" value="1"/>
</dbReference>
<dbReference type="InterPro" id="IPR008949">
    <property type="entry name" value="Isoprenoid_synthase_dom_sf"/>
</dbReference>
<dbReference type="InterPro" id="IPR047945">
    <property type="entry name" value="MIB_synthase"/>
</dbReference>
<dbReference type="InterPro" id="IPR034686">
    <property type="entry name" value="Terpene_cyclase-like_2"/>
</dbReference>
<dbReference type="NCBIfam" id="NF041167">
    <property type="entry name" value="f2_encap_cargo2"/>
    <property type="match status" value="1"/>
</dbReference>
<dbReference type="PANTHER" id="PTHR35201:SF4">
    <property type="entry name" value="BETA-PINACENE SYNTHASE-RELATED"/>
    <property type="match status" value="1"/>
</dbReference>
<dbReference type="PANTHER" id="PTHR35201">
    <property type="entry name" value="TERPENE SYNTHASE"/>
    <property type="match status" value="1"/>
</dbReference>
<dbReference type="Pfam" id="PF19086">
    <property type="entry name" value="Terpene_syn_C_2"/>
    <property type="match status" value="1"/>
</dbReference>
<dbReference type="SFLD" id="SFLDS00005">
    <property type="entry name" value="Isoprenoid_Synthase_Type_I"/>
    <property type="match status" value="1"/>
</dbReference>
<dbReference type="SFLD" id="SFLDG01020">
    <property type="entry name" value="Terpene_Cyclase_Like_2"/>
    <property type="match status" value="1"/>
</dbReference>
<dbReference type="SUPFAM" id="SSF48576">
    <property type="entry name" value="Terpenoid synthases"/>
    <property type="match status" value="1"/>
</dbReference>
<reference key="1">
    <citation type="submission" date="1999-11" db="EMBL/GenBank/DDBJ databases">
        <authorList>
            <person name="Watanabe M."/>
            <person name="Kawamoto S."/>
            <person name="Ochi K."/>
        </authorList>
    </citation>
    <scope>NUCLEOTIDE SEQUENCE [GENOMIC DNA]</scope>
    <source>
        <strain>A3(2) / 1147</strain>
    </source>
</reference>
<reference key="2">
    <citation type="journal article" date="2002" name="Nature">
        <title>Complete genome sequence of the model actinomycete Streptomyces coelicolor A3(2).</title>
        <authorList>
            <person name="Bentley S.D."/>
            <person name="Chater K.F."/>
            <person name="Cerdeno-Tarraga A.-M."/>
            <person name="Challis G.L."/>
            <person name="Thomson N.R."/>
            <person name="James K.D."/>
            <person name="Harris D.E."/>
            <person name="Quail M.A."/>
            <person name="Kieser H."/>
            <person name="Harper D."/>
            <person name="Bateman A."/>
            <person name="Brown S."/>
            <person name="Chandra G."/>
            <person name="Chen C.W."/>
            <person name="Collins M."/>
            <person name="Cronin A."/>
            <person name="Fraser A."/>
            <person name="Goble A."/>
            <person name="Hidalgo J."/>
            <person name="Hornsby T."/>
            <person name="Howarth S."/>
            <person name="Huang C.-H."/>
            <person name="Kieser T."/>
            <person name="Larke L."/>
            <person name="Murphy L.D."/>
            <person name="Oliver K."/>
            <person name="O'Neil S."/>
            <person name="Rabbinowitsch E."/>
            <person name="Rajandream M.A."/>
            <person name="Rutherford K.M."/>
            <person name="Rutter S."/>
            <person name="Seeger K."/>
            <person name="Saunders D."/>
            <person name="Sharp S."/>
            <person name="Squares R."/>
            <person name="Squares S."/>
            <person name="Taylor K."/>
            <person name="Warren T."/>
            <person name="Wietzorrek A."/>
            <person name="Woodward J.R."/>
            <person name="Barrell B.G."/>
            <person name="Parkhill J."/>
            <person name="Hopwood D.A."/>
        </authorList>
    </citation>
    <scope>NUCLEOTIDE SEQUENCE [LARGE SCALE GENOMIC DNA]</scope>
    <source>
        <strain>ATCC BAA-471 / A3(2) / M145</strain>
    </source>
</reference>
<reference key="3">
    <citation type="journal article" date="2008" name="J. Am. Chem. Soc.">
        <title>Biochemistry and molecular genetics of the biosynthesis of the earthy odorant methylisoborneol in Streptomyces coelicolor.</title>
        <authorList>
            <person name="Wang C.M."/>
            <person name="Cane D.E."/>
        </authorList>
    </citation>
    <scope>FUNCTION</scope>
    <scope>CATALYTIC ACTIVITY</scope>
    <scope>COFACTOR</scope>
    <scope>PATHWAY</scope>
    <scope>KINETIC STUDIES</scope>
    <scope>IDENTIFICATION BY MASS SPECTROMETRY</scope>
    <source>
        <strain>A3(2) / NRRL B-16638</strain>
    </source>
</reference>
<reference key="4">
    <citation type="journal article" date="2010" name="J. Am. Chem. Soc.">
        <authorList>
            <person name="Wang C.M."/>
            <person name="Cane D.E."/>
        </authorList>
    </citation>
    <scope>ERRATUM OF PUBMED:18563898</scope>
</reference>
<comment type="function">
    <text evidence="3">Catalyzes the cyclization of 2-methylgeranyl diphosphate (2-MeGPP) to 2-methylisoborneol (2-MIB), which likely involves the intermediacy of 2-methyllinalyl diphosphate. Is also able to catalyze the cyclization of geranyl diphosphate (GPP), albeit with much lower efficiency, leading to the formation of a complex mixture of cyclic monoterpenes, consisting of alpha-pinene (6%), beta-pinene (23%), limonene (32%), gamma-terpinene (29%), and delta-terpinene (10%).</text>
</comment>
<comment type="catalytic activity">
    <reaction evidence="3">
        <text>(E)-2-methylgeranyl diphosphate + H2O = 2-methylisoborneol + diphosphate</text>
        <dbReference type="Rhea" id="RHEA:32571"/>
        <dbReference type="ChEBI" id="CHEBI:15377"/>
        <dbReference type="ChEBI" id="CHEBI:33019"/>
        <dbReference type="ChEBI" id="CHEBI:61984"/>
        <dbReference type="ChEBI" id="CHEBI:61987"/>
        <dbReference type="EC" id="4.2.3.118"/>
    </reaction>
</comment>
<comment type="cofactor">
    <cofactor evidence="5">
        <name>Mg(2+)</name>
        <dbReference type="ChEBI" id="CHEBI:18420"/>
    </cofactor>
</comment>
<comment type="miscellaneous">
    <text>2-MIB is a volatile organic compound that has an unusually low odor threshold. Together with geosmin, methylisoborneol is responsible for the characteristic smell of moist soil as well as unpleasant taste and odor episodes associated with public water supplies and contamination of various foodstuffs, including fish, wine, and beer.</text>
</comment>
<comment type="similarity">
    <text evidence="4">Belongs to the terpene synthase family. 2-methylisoborneol synthase subfamily.</text>
</comment>
<feature type="chain" id="PRO_0000205354" description="2-methylisoborneol synthase">
    <location>
        <begin position="1"/>
        <end position="440"/>
    </location>
</feature>
<feature type="region of interest" description="Disordered" evidence="2">
    <location>
        <begin position="1"/>
        <end position="33"/>
    </location>
</feature>
<feature type="region of interest" description="Disordered" evidence="2">
    <location>
        <begin position="46"/>
        <end position="74"/>
    </location>
</feature>
<feature type="compositionally biased region" description="Pro residues" evidence="2">
    <location>
        <begin position="9"/>
        <end position="29"/>
    </location>
</feature>
<feature type="compositionally biased region" description="Pro residues" evidence="2">
    <location>
        <begin position="50"/>
        <end position="63"/>
    </location>
</feature>
<feature type="binding site" evidence="1">
    <location>
        <position position="197"/>
    </location>
    <ligand>
        <name>Mg(2+)</name>
        <dbReference type="ChEBI" id="CHEBI:18420"/>
    </ligand>
</feature>
<feature type="binding site" evidence="1">
    <location>
        <position position="198"/>
    </location>
    <ligand>
        <name>Mg(2+)</name>
        <dbReference type="ChEBI" id="CHEBI:18420"/>
    </ligand>
</feature>
<feature type="binding site" evidence="1">
    <location>
        <position position="202"/>
    </location>
    <ligand>
        <name>Mg(2+)</name>
        <dbReference type="ChEBI" id="CHEBI:18420"/>
    </ligand>
</feature>
<feature type="binding site" evidence="1">
    <location>
        <position position="345"/>
    </location>
    <ligand>
        <name>Mg(2+)</name>
        <dbReference type="ChEBI" id="CHEBI:18420"/>
    </ligand>
</feature>
<feature type="binding site" evidence="1">
    <location>
        <position position="349"/>
    </location>
    <ligand>
        <name>Mg(2+)</name>
        <dbReference type="ChEBI" id="CHEBI:18420"/>
    </ligand>
</feature>
<feature type="binding site" evidence="1">
    <location>
        <position position="353"/>
    </location>
    <ligand>
        <name>Mg(2+)</name>
        <dbReference type="ChEBI" id="CHEBI:18420"/>
    </ligand>
</feature>
<feature type="helix" evidence="6">
    <location>
        <begin position="132"/>
        <end position="148"/>
    </location>
</feature>
<feature type="helix" evidence="7">
    <location>
        <begin position="155"/>
        <end position="157"/>
    </location>
</feature>
<feature type="helix" evidence="6">
    <location>
        <begin position="163"/>
        <end position="173"/>
    </location>
</feature>
<feature type="helix" evidence="6">
    <location>
        <begin position="180"/>
        <end position="200"/>
    </location>
</feature>
<feature type="strand" evidence="7">
    <location>
        <begin position="204"/>
        <end position="206"/>
    </location>
</feature>
<feature type="helix" evidence="6">
    <location>
        <begin position="211"/>
        <end position="219"/>
    </location>
</feature>
<feature type="turn" evidence="6">
    <location>
        <begin position="220"/>
        <end position="222"/>
    </location>
</feature>
<feature type="turn" evidence="6">
    <location>
        <begin position="229"/>
        <end position="231"/>
    </location>
</feature>
<feature type="helix" evidence="6">
    <location>
        <begin position="232"/>
        <end position="238"/>
    </location>
</feature>
<feature type="helix" evidence="6">
    <location>
        <begin position="243"/>
        <end position="258"/>
    </location>
</feature>
<feature type="helix" evidence="6">
    <location>
        <begin position="261"/>
        <end position="286"/>
    </location>
</feature>
<feature type="helix" evidence="6">
    <location>
        <begin position="293"/>
        <end position="302"/>
    </location>
</feature>
<feature type="strand" evidence="6">
    <location>
        <begin position="303"/>
        <end position="305"/>
    </location>
</feature>
<feature type="turn" evidence="6">
    <location>
        <begin position="306"/>
        <end position="308"/>
    </location>
</feature>
<feature type="helix" evidence="6">
    <location>
        <begin position="309"/>
        <end position="311"/>
    </location>
</feature>
<feature type="helix" evidence="6">
    <location>
        <begin position="312"/>
        <end position="316"/>
    </location>
</feature>
<feature type="helix" evidence="6">
    <location>
        <begin position="322"/>
        <end position="325"/>
    </location>
</feature>
<feature type="helix" evidence="6">
    <location>
        <begin position="328"/>
        <end position="348"/>
    </location>
</feature>
<feature type="helix" evidence="6">
    <location>
        <begin position="350"/>
        <end position="353"/>
    </location>
</feature>
<feature type="strand" evidence="6">
    <location>
        <begin position="356"/>
        <end position="358"/>
    </location>
</feature>
<feature type="helix" evidence="6">
    <location>
        <begin position="363"/>
        <end position="371"/>
    </location>
</feature>
<feature type="helix" evidence="6">
    <location>
        <begin position="375"/>
        <end position="403"/>
    </location>
</feature>
<feature type="helix" evidence="6">
    <location>
        <begin position="407"/>
        <end position="429"/>
    </location>
</feature>
<feature type="turn" evidence="6">
    <location>
        <begin position="431"/>
        <end position="433"/>
    </location>
</feature>
<sequence length="440" mass="47793">MPDSGTLGTPPPEQGPTPPTTLPDVPAPVIPSASVTSAASDFLAALHPPVTVPDPAPPPPPAPAAGNPPDTVTGDSVLQRILRGPTGPGTTSLAPAVRYGRQPGPEAPASAPPAAGRAVPGLYHHPVPEPDPVRVEEVSRRIKRWAEDEVQLYPEEWEGQFDGFSVGRYMVGCHPDAPTVDHLMLATRLMVAENAVDDCYCEDHGGSPVGLGGRLLLAHTAIDHFHSTAEYTPTWQASLAADAPRRAYDSAMGYFVRAATPSQSDRYRHDMARLHLGYLAEGAWAQTGHVPEVWEYLAMRQFNNFRPCPTITDTVGGYELPADLHARPDMQRVIALAGNATTIVNDLYSYTKELNSPGRHLNLPVVIAEREQLCERDAYLKAVEVHNELQHSFEAAAADLAEACPLPPVLRFLRGVAAWVDGNHDWHRTNTYRYSLPDFW</sequence>
<protein>
    <recommendedName>
        <fullName>2-methylisoborneol synthase</fullName>
        <shortName>2-MIB synthase</shortName>
        <ecNumber>4.2.3.118</ecNumber>
    </recommendedName>
</protein>